<protein>
    <recommendedName>
        <fullName evidence="1">1-(5-phosphoribosyl)-5-[(5-phosphoribosylamino)methylideneamino] imidazole-4-carboxamide isomerase</fullName>
        <ecNumber evidence="1">5.3.1.16</ecNumber>
    </recommendedName>
    <alternativeName>
        <fullName evidence="1">Phosphoribosylformimino-5-aminoimidazole carboxamide ribotide isomerase</fullName>
    </alternativeName>
</protein>
<reference key="1">
    <citation type="submission" date="2008-03" db="EMBL/GenBank/DDBJ databases">
        <title>Complete sequence of Leptothrix cholodnii SP-6.</title>
        <authorList>
            <consortium name="US DOE Joint Genome Institute"/>
            <person name="Copeland A."/>
            <person name="Lucas S."/>
            <person name="Lapidus A."/>
            <person name="Glavina del Rio T."/>
            <person name="Dalin E."/>
            <person name="Tice H."/>
            <person name="Bruce D."/>
            <person name="Goodwin L."/>
            <person name="Pitluck S."/>
            <person name="Chertkov O."/>
            <person name="Brettin T."/>
            <person name="Detter J.C."/>
            <person name="Han C."/>
            <person name="Kuske C.R."/>
            <person name="Schmutz J."/>
            <person name="Larimer F."/>
            <person name="Land M."/>
            <person name="Hauser L."/>
            <person name="Kyrpides N."/>
            <person name="Lykidis A."/>
            <person name="Emerson D."/>
            <person name="Richardson P."/>
        </authorList>
    </citation>
    <scope>NUCLEOTIDE SEQUENCE [LARGE SCALE GENOMIC DNA]</scope>
    <source>
        <strain>ATCC 51168 / LMG 8142 / SP-6</strain>
    </source>
</reference>
<sequence>MLLIPAIDLKDGKCVRLKQGDMNDSTTFGEDPAAMARRWVDAGARRLHLVDLNGAFAGKPVNEGAIKSIIAAVGGDIPIQLGGGIRDLDTIERYLDDGLSYVIIGTAAVKNPGFLRDACTAFGGHIIVGLDARDGKVATDGWSKLTGHEVVDLARKFQDYGVEGVIYTDIGRDGMLSGINIEATVKLAQALTIPVIASGGLSNMADIDALCAVEHEGVDGVICGRSIYSGDLDFAAGQKRADELNGGRV</sequence>
<dbReference type="EC" id="5.3.1.16" evidence="1"/>
<dbReference type="EMBL" id="CP001013">
    <property type="protein sequence ID" value="ACB33858.1"/>
    <property type="molecule type" value="Genomic_DNA"/>
</dbReference>
<dbReference type="RefSeq" id="WP_012346619.1">
    <property type="nucleotide sequence ID" value="NC_010524.1"/>
</dbReference>
<dbReference type="SMR" id="B1XX77"/>
<dbReference type="STRING" id="395495.Lcho_1591"/>
<dbReference type="KEGG" id="lch:Lcho_1591"/>
<dbReference type="eggNOG" id="COG0106">
    <property type="taxonomic scope" value="Bacteria"/>
</dbReference>
<dbReference type="HOGENOM" id="CLU_048577_1_1_4"/>
<dbReference type="OrthoDB" id="9807749at2"/>
<dbReference type="UniPathway" id="UPA00031">
    <property type="reaction ID" value="UER00009"/>
</dbReference>
<dbReference type="Proteomes" id="UP000001693">
    <property type="component" value="Chromosome"/>
</dbReference>
<dbReference type="GO" id="GO:0005737">
    <property type="term" value="C:cytoplasm"/>
    <property type="evidence" value="ECO:0007669"/>
    <property type="project" value="UniProtKB-SubCell"/>
</dbReference>
<dbReference type="GO" id="GO:0003949">
    <property type="term" value="F:1-(5-phosphoribosyl)-5-[(5-phosphoribosylamino)methylideneamino]imidazole-4-carboxamide isomerase activity"/>
    <property type="evidence" value="ECO:0007669"/>
    <property type="project" value="UniProtKB-UniRule"/>
</dbReference>
<dbReference type="GO" id="GO:0000105">
    <property type="term" value="P:L-histidine biosynthetic process"/>
    <property type="evidence" value="ECO:0007669"/>
    <property type="project" value="UniProtKB-UniRule"/>
</dbReference>
<dbReference type="GO" id="GO:0000162">
    <property type="term" value="P:L-tryptophan biosynthetic process"/>
    <property type="evidence" value="ECO:0007669"/>
    <property type="project" value="TreeGrafter"/>
</dbReference>
<dbReference type="CDD" id="cd04732">
    <property type="entry name" value="HisA"/>
    <property type="match status" value="1"/>
</dbReference>
<dbReference type="FunFam" id="3.20.20.70:FF:000009">
    <property type="entry name" value="1-(5-phosphoribosyl)-5-[(5-phosphoribosylamino)methylideneamino] imidazole-4-carboxamide isomerase"/>
    <property type="match status" value="1"/>
</dbReference>
<dbReference type="Gene3D" id="3.20.20.70">
    <property type="entry name" value="Aldolase class I"/>
    <property type="match status" value="1"/>
</dbReference>
<dbReference type="HAMAP" id="MF_01014">
    <property type="entry name" value="HisA"/>
    <property type="match status" value="1"/>
</dbReference>
<dbReference type="InterPro" id="IPR013785">
    <property type="entry name" value="Aldolase_TIM"/>
</dbReference>
<dbReference type="InterPro" id="IPR006062">
    <property type="entry name" value="His_biosynth"/>
</dbReference>
<dbReference type="InterPro" id="IPR006063">
    <property type="entry name" value="HisA_bact_arch"/>
</dbReference>
<dbReference type="InterPro" id="IPR044524">
    <property type="entry name" value="Isoase_HisA-like"/>
</dbReference>
<dbReference type="InterPro" id="IPR023016">
    <property type="entry name" value="Isoase_HisA-like_bact"/>
</dbReference>
<dbReference type="InterPro" id="IPR011060">
    <property type="entry name" value="RibuloseP-bd_barrel"/>
</dbReference>
<dbReference type="NCBIfam" id="TIGR00007">
    <property type="entry name" value="1-(5-phosphoribosyl)-5-[(5-phosphoribosylamino)methylideneamino]imidazole-4-carboxamide isomerase"/>
    <property type="match status" value="1"/>
</dbReference>
<dbReference type="PANTHER" id="PTHR43090">
    <property type="entry name" value="1-(5-PHOSPHORIBOSYL)-5-[(5-PHOSPHORIBOSYLAMINO)METHYLIDENEAMINO] IMIDAZOLE-4-CARBOXAMIDE ISOMERASE"/>
    <property type="match status" value="1"/>
</dbReference>
<dbReference type="PANTHER" id="PTHR43090:SF2">
    <property type="entry name" value="1-(5-PHOSPHORIBOSYL)-5-[(5-PHOSPHORIBOSYLAMINO)METHYLIDENEAMINO] IMIDAZOLE-4-CARBOXAMIDE ISOMERASE"/>
    <property type="match status" value="1"/>
</dbReference>
<dbReference type="Pfam" id="PF00977">
    <property type="entry name" value="His_biosynth"/>
    <property type="match status" value="1"/>
</dbReference>
<dbReference type="SUPFAM" id="SSF51366">
    <property type="entry name" value="Ribulose-phoshate binding barrel"/>
    <property type="match status" value="1"/>
</dbReference>
<accession>B1XX77</accession>
<feature type="chain" id="PRO_1000135129" description="1-(5-phosphoribosyl)-5-[(5-phosphoribosylamino)methylideneamino] imidazole-4-carboxamide isomerase">
    <location>
        <begin position="1"/>
        <end position="249"/>
    </location>
</feature>
<feature type="active site" description="Proton acceptor" evidence="1">
    <location>
        <position position="8"/>
    </location>
</feature>
<feature type="active site" description="Proton donor" evidence="1">
    <location>
        <position position="131"/>
    </location>
</feature>
<gene>
    <name evidence="1" type="primary">hisA</name>
    <name type="ordered locus">Lcho_1591</name>
</gene>
<keyword id="KW-0028">Amino-acid biosynthesis</keyword>
<keyword id="KW-0963">Cytoplasm</keyword>
<keyword id="KW-0368">Histidine biosynthesis</keyword>
<keyword id="KW-0413">Isomerase</keyword>
<keyword id="KW-1185">Reference proteome</keyword>
<evidence type="ECO:0000255" key="1">
    <source>
        <dbReference type="HAMAP-Rule" id="MF_01014"/>
    </source>
</evidence>
<proteinExistence type="inferred from homology"/>
<organism>
    <name type="scientific">Leptothrix cholodnii (strain ATCC 51168 / LMG 8142 / SP-6)</name>
    <name type="common">Leptothrix discophora (strain SP-6)</name>
    <dbReference type="NCBI Taxonomy" id="395495"/>
    <lineage>
        <taxon>Bacteria</taxon>
        <taxon>Pseudomonadati</taxon>
        <taxon>Pseudomonadota</taxon>
        <taxon>Betaproteobacteria</taxon>
        <taxon>Burkholderiales</taxon>
        <taxon>Sphaerotilaceae</taxon>
        <taxon>Leptothrix</taxon>
    </lineage>
</organism>
<comment type="catalytic activity">
    <reaction evidence="1">
        <text>1-(5-phospho-beta-D-ribosyl)-5-[(5-phospho-beta-D-ribosylamino)methylideneamino]imidazole-4-carboxamide = 5-[(5-phospho-1-deoxy-D-ribulos-1-ylimino)methylamino]-1-(5-phospho-beta-D-ribosyl)imidazole-4-carboxamide</text>
        <dbReference type="Rhea" id="RHEA:15469"/>
        <dbReference type="ChEBI" id="CHEBI:58435"/>
        <dbReference type="ChEBI" id="CHEBI:58525"/>
        <dbReference type="EC" id="5.3.1.16"/>
    </reaction>
</comment>
<comment type="pathway">
    <text evidence="1">Amino-acid biosynthesis; L-histidine biosynthesis; L-histidine from 5-phospho-alpha-D-ribose 1-diphosphate: step 4/9.</text>
</comment>
<comment type="subcellular location">
    <subcellularLocation>
        <location evidence="1">Cytoplasm</location>
    </subcellularLocation>
</comment>
<comment type="similarity">
    <text evidence="1">Belongs to the HisA/HisF family.</text>
</comment>
<name>HIS4_LEPCP</name>